<sequence length="173" mass="17149">FVQSALSQCLGRVDRRIIGGCGLEAPFAWDGALGWDGLRGWDAPYGCGLAAPAIDFSPTSGGALPVSSASAIAPVGLAVASENVYEGILAAAGELPFVGTVGVEGILPTAGAGAVHHSCGNGLNEMASRDAAFVPRFADAYGIGLGAYGLEVPVLGAPALGYRAGWKGCGCGL</sequence>
<protein>
    <recommendedName>
        <fullName>Chorion class B protein Ld32</fullName>
    </recommendedName>
</protein>
<reference key="1">
    <citation type="journal article" date="1994" name="J. Mol. Evol.">
        <title>Evolution of chorion gene families in lepidoptera: characterization of 15 cDNAs from the gypsy moth.</title>
        <authorList>
            <person name="Leclerc R.F."/>
            <person name="Regier J.C."/>
        </authorList>
    </citation>
    <scope>NUCLEOTIDE SEQUENCE [MRNA]</scope>
    <source>
        <tissue>Choriogenic follicle</tissue>
    </source>
</reference>
<keyword id="KW-0677">Repeat</keyword>
<keyword id="KW-0732">Signal</keyword>
<accession>P50604</accession>
<name>CHB2_LYMDI</name>
<organism>
    <name type="scientific">Lymantria dispar</name>
    <name type="common">Gypsy moth</name>
    <name type="synonym">Porthetria dispar</name>
    <dbReference type="NCBI Taxonomy" id="13123"/>
    <lineage>
        <taxon>Eukaryota</taxon>
        <taxon>Metazoa</taxon>
        <taxon>Ecdysozoa</taxon>
        <taxon>Arthropoda</taxon>
        <taxon>Hexapoda</taxon>
        <taxon>Insecta</taxon>
        <taxon>Pterygota</taxon>
        <taxon>Neoptera</taxon>
        <taxon>Endopterygota</taxon>
        <taxon>Lepidoptera</taxon>
        <taxon>Glossata</taxon>
        <taxon>Ditrysia</taxon>
        <taxon>Noctuoidea</taxon>
        <taxon>Erebidae</taxon>
        <taxon>Lymantriinae</taxon>
        <taxon>Lymantria</taxon>
    </lineage>
</organism>
<feature type="signal peptide" evidence="1">
    <location>
        <begin position="1" status="less than"/>
        <end position="7"/>
    </location>
</feature>
<feature type="chain" id="PRO_0000005395" description="Chorion class B protein Ld32">
    <location>
        <begin position="8"/>
        <end position="173"/>
    </location>
</feature>
<feature type="non-terminal residue">
    <location>
        <position position="1"/>
    </location>
</feature>
<dbReference type="EMBL" id="U04667">
    <property type="protein sequence ID" value="AAA67867.1"/>
    <property type="molecule type" value="mRNA"/>
</dbReference>
<dbReference type="GO" id="GO:0042600">
    <property type="term" value="C:egg chorion"/>
    <property type="evidence" value="ECO:0007669"/>
    <property type="project" value="InterPro"/>
</dbReference>
<dbReference type="GO" id="GO:0005213">
    <property type="term" value="F:structural constituent of egg chorion"/>
    <property type="evidence" value="ECO:0007669"/>
    <property type="project" value="InterPro"/>
</dbReference>
<dbReference type="GO" id="GO:0007304">
    <property type="term" value="P:chorion-containing eggshell formation"/>
    <property type="evidence" value="ECO:0007669"/>
    <property type="project" value="InterPro"/>
</dbReference>
<dbReference type="InterPro" id="IPR002635">
    <property type="entry name" value="Chorion"/>
</dbReference>
<dbReference type="Pfam" id="PF01723">
    <property type="entry name" value="Chorion_1"/>
    <property type="match status" value="1"/>
</dbReference>
<proteinExistence type="evidence at transcript level"/>
<comment type="function">
    <text>This protein is one of many from the eggshell of the gypsy moth.</text>
</comment>
<comment type="similarity">
    <text evidence="2">Belongs to the chorion protein family.</text>
</comment>
<evidence type="ECO:0000255" key="1"/>
<evidence type="ECO:0000305" key="2"/>